<name>H1A01_CYRHA</name>
<comment type="function">
    <text evidence="3 5">Weakly blocks the rat SCN2A/SCN1B (Nav1.2/beta-1) sodium channel (IC(50)=68 uM) and the insect sodium channel para/tipE (IC(50)=4.3 uM), without altering the activation or inactivation kinetics (depressant toxin).</text>
</comment>
<comment type="subunit">
    <text evidence="3">Monomer.</text>
</comment>
<comment type="subcellular location">
    <subcellularLocation>
        <location evidence="3">Secreted</location>
    </subcellularLocation>
</comment>
<comment type="tissue specificity">
    <text evidence="3">Expressed by the venom gland.</text>
</comment>
<comment type="domain">
    <text evidence="3 5">The presence of a 'disulfide through disulfide knot' structurally defines this protein as a knottin.</text>
</comment>
<comment type="mass spectrometry"/>
<comment type="miscellaneous">
    <text evidence="3 5">Negative results: has no effect on mammalian SCN3A/SCN1B (Nav1.3/beta-1), SCN4A (Nav1.4), SCN5A/SCN1B (Nav1.5/beta-1), and SCN9A/SCN1B (Nav1.7/beta-1) (PubMed:14675784, PubMed:26429937). Has also no effect on sodium subtypes in rat DRG neurons containing Nav1.1/SCN1A, Nav1.6/SCN8A, Nav1.7/SCN9A, Nav1.8/SCN10A and Nav1.9/SCN11A (PubMed:14675784).</text>
</comment>
<comment type="miscellaneous">
    <text evidence="13">Klint et al., 2015 worked with a recombinant peptide N-terminally extended by an Ala residue.</text>
</comment>
<comment type="similarity">
    <text evidence="10">Belongs to the neurotoxin 10 (Hwtx-1) family. 14 (Hntx-1) subfamily.</text>
</comment>
<accession>D2Y1X6</accession>
<accession>P83591</accession>
<feature type="signal peptide" evidence="1">
    <location>
        <begin position="1"/>
        <end position="21"/>
    </location>
</feature>
<feature type="propeptide" id="PRO_0000400495" evidence="11 12">
    <location>
        <begin position="22"/>
        <end position="48"/>
    </location>
</feature>
<feature type="peptide" id="PRO_0000045004" description="Mu-theraphotoxin-Hhn2b 1" evidence="2 4">
    <location>
        <begin position="49"/>
        <end position="81"/>
    </location>
</feature>
<feature type="modified residue" description="Leucine amide" evidence="3">
    <location>
        <position position="81"/>
    </location>
</feature>
<feature type="disulfide bond" evidence="3 5 14 15 16">
    <location>
        <begin position="50"/>
        <end position="65"/>
    </location>
</feature>
<feature type="disulfide bond" evidence="3 5 14 15 16">
    <location>
        <begin position="57"/>
        <end position="70"/>
    </location>
</feature>
<feature type="disulfide bond" evidence="3 5 14 15 16">
    <location>
        <begin position="64"/>
        <end position="77"/>
    </location>
</feature>
<feature type="mutagenesis site" description="No gain of activity against hNav1.7/SCN9A." evidence="5">
    <original>K</original>
    <variation>L</variation>
    <location>
        <position position="51"/>
    </location>
</feature>
<feature type="mutagenesis site" description="Low gain of inhibition activity against hNav1.7/SCN9A (IC(50)=2.7 uM), and gain of binding to anionic POPG liposome. Important gain of inhibition activity (IC(50)=440 nM), and gain of binding to anionic POPG liposome; when associated with S-71." evidence="5">
    <original>G</original>
    <variation>W</variation>
    <location>
        <position position="54"/>
    </location>
</feature>
<feature type="mutagenesis site" description="Low gain of inhibition activity against hNav1.7/SCN9A (IC(50)=4.0 uM) and no change in binding to anionic POPG liposome. Important gain of inhibition activity (IC(50)=440 nM), and gain of binding to anionic POPG liposome; when associated with W-54." evidence="5">
    <original>N</original>
    <variation>S</variation>
    <location>
        <position position="71"/>
    </location>
</feature>
<feature type="mutagenesis site" description="No gain of activity against hNav1.7/SCN9A." evidence="5">
    <original>V</original>
    <variation>W</variation>
    <location>
        <position position="79"/>
    </location>
</feature>
<feature type="turn" evidence="17">
    <location>
        <begin position="59"/>
        <end position="62"/>
    </location>
</feature>
<feature type="strand" evidence="17">
    <location>
        <begin position="68"/>
        <end position="70"/>
    </location>
</feature>
<feature type="strand" evidence="17">
    <location>
        <begin position="72"/>
        <end position="79"/>
    </location>
</feature>
<protein>
    <recommendedName>
        <fullName evidence="13">Mu-theraphotoxin-Hhn2b 1</fullName>
        <shortName evidence="9">Mu-TRTX-Hhn2b</shortName>
    </recommendedName>
    <alternativeName>
        <fullName evidence="6 7 8">Hainantoxin-I</fullName>
        <shortName evidence="6 7 8">HnTx-I</shortName>
    </alternativeName>
    <alternativeName>
        <fullName>Peptide F5-19.03</fullName>
    </alternativeName>
</protein>
<evidence type="ECO:0000255" key="1"/>
<evidence type="ECO:0000269" key="2">
    <source>
    </source>
</evidence>
<evidence type="ECO:0000269" key="3">
    <source>
    </source>
</evidence>
<evidence type="ECO:0000269" key="4">
    <source>
    </source>
</evidence>
<evidence type="ECO:0000269" key="5">
    <source>
    </source>
</evidence>
<evidence type="ECO:0000303" key="6">
    <source>
    </source>
</evidence>
<evidence type="ECO:0000303" key="7">
    <source>
    </source>
</evidence>
<evidence type="ECO:0000303" key="8">
    <source>
    </source>
</evidence>
<evidence type="ECO:0000303" key="9">
    <source>
    </source>
</evidence>
<evidence type="ECO:0000305" key="10"/>
<evidence type="ECO:0000305" key="11">
    <source>
    </source>
</evidence>
<evidence type="ECO:0000305" key="12">
    <source>
    </source>
</evidence>
<evidence type="ECO:0000305" key="13">
    <source>
    </source>
</evidence>
<evidence type="ECO:0007744" key="14">
    <source>
        <dbReference type="PDB" id="1NIX"/>
    </source>
</evidence>
<evidence type="ECO:0007744" key="15">
    <source>
        <dbReference type="PDB" id="2MQF"/>
    </source>
</evidence>
<evidence type="ECO:0007744" key="16">
    <source>
        <dbReference type="PDB" id="2MXO"/>
    </source>
</evidence>
<evidence type="ECO:0007829" key="17">
    <source>
        <dbReference type="PDB" id="1NIX"/>
    </source>
</evidence>
<dbReference type="EMBL" id="GU292853">
    <property type="protein sequence ID" value="ADB56669.1"/>
    <property type="molecule type" value="mRNA"/>
</dbReference>
<dbReference type="PDB" id="1NIX">
    <property type="method" value="NMR"/>
    <property type="chains" value="A=49-81"/>
</dbReference>
<dbReference type="PDB" id="2MQF">
    <property type="method" value="NMR"/>
    <property type="chains" value="A=48-81"/>
</dbReference>
<dbReference type="PDB" id="2MXO">
    <property type="method" value="NMR"/>
    <property type="chains" value="A=48-81"/>
</dbReference>
<dbReference type="PDBsum" id="1NIX"/>
<dbReference type="PDBsum" id="2MQF"/>
<dbReference type="PDBsum" id="2MXO"/>
<dbReference type="BMRB" id="D2Y1X6"/>
<dbReference type="SMR" id="D2Y1X6"/>
<dbReference type="ArachnoServer" id="AS000338">
    <property type="toxin name" value="mu-theraphotoxin-Hhn2b"/>
</dbReference>
<dbReference type="EvolutionaryTrace" id="D2Y1X6"/>
<dbReference type="GO" id="GO:0005576">
    <property type="term" value="C:extracellular region"/>
    <property type="evidence" value="ECO:0007669"/>
    <property type="project" value="UniProtKB-SubCell"/>
</dbReference>
<dbReference type="GO" id="GO:0008200">
    <property type="term" value="F:ion channel inhibitor activity"/>
    <property type="evidence" value="ECO:0007669"/>
    <property type="project" value="InterPro"/>
</dbReference>
<dbReference type="GO" id="GO:0017080">
    <property type="term" value="F:sodium channel regulator activity"/>
    <property type="evidence" value="ECO:0007669"/>
    <property type="project" value="UniProtKB-KW"/>
</dbReference>
<dbReference type="GO" id="GO:0090729">
    <property type="term" value="F:toxin activity"/>
    <property type="evidence" value="ECO:0007669"/>
    <property type="project" value="UniProtKB-KW"/>
</dbReference>
<dbReference type="InterPro" id="IPR011696">
    <property type="entry name" value="Huwentoxin-1"/>
</dbReference>
<dbReference type="InterPro" id="IPR013140">
    <property type="entry name" value="Huwentoxin_CS1"/>
</dbReference>
<dbReference type="Pfam" id="PF07740">
    <property type="entry name" value="Toxin_12"/>
    <property type="match status" value="1"/>
</dbReference>
<dbReference type="SUPFAM" id="SSF57059">
    <property type="entry name" value="omega toxin-like"/>
    <property type="match status" value="1"/>
</dbReference>
<dbReference type="PROSITE" id="PS60021">
    <property type="entry name" value="HWTX_1"/>
    <property type="match status" value="1"/>
</dbReference>
<proteinExistence type="evidence at protein level"/>
<keyword id="KW-0002">3D-structure</keyword>
<keyword id="KW-0027">Amidation</keyword>
<keyword id="KW-0903">Direct protein sequencing</keyword>
<keyword id="KW-1015">Disulfide bond</keyword>
<keyword id="KW-0872">Ion channel impairing toxin</keyword>
<keyword id="KW-0960">Knottin</keyword>
<keyword id="KW-0528">Neurotoxin</keyword>
<keyword id="KW-0964">Secreted</keyword>
<keyword id="KW-0732">Signal</keyword>
<keyword id="KW-0800">Toxin</keyword>
<keyword id="KW-0738">Voltage-gated sodium channel impairing toxin</keyword>
<reference key="1">
    <citation type="journal article" date="2010" name="J. Proteome Res.">
        <title>Molecular diversification of peptide toxins from the tarantula Haplopelma hainanum (Ornithoctonus hainana) venom based on transcriptomic, peptidomic, and genomic analyses.</title>
        <authorList>
            <person name="Tang X."/>
            <person name="Zhang Y."/>
            <person name="Hu W."/>
            <person name="Xu D."/>
            <person name="Tao H."/>
            <person name="Yang X."/>
            <person name="Li Y."/>
            <person name="Jiang L."/>
            <person name="Liang S."/>
        </authorList>
    </citation>
    <scope>NUCLEOTIDE SEQUENCE [LARGE SCALE MRNA]</scope>
    <scope>PROTEIN SEQUENCE OF 49-81</scope>
    <scope>IDENTIFICATION BY MASS SPECTROMETRY</scope>
    <source>
        <tissue>Venom</tissue>
        <tissue>Venom gland</tissue>
    </source>
</reference>
<reference key="2">
    <citation type="journal article" date="2003" name="Toxicon">
        <title>Purification and characterization of Hainantoxin-V, a tetrodotoxin-sensitive sodium channel inhibitor from the venom of the spider Selenocosmia hainana.</title>
        <authorList>
            <person name="Xiao Y.-C."/>
            <person name="Liang S.-P."/>
        </authorList>
    </citation>
    <scope>PROTEIN SEQUENCE OF 49-81</scope>
    <source>
        <tissue>Venom</tissue>
    </source>
</reference>
<reference key="3">
    <citation type="journal article" date="2003" name="FEBS Lett.">
        <title>Function and solution structure of hainantoxin-I, a novel insect sodium channel inhibitor from the Chinese bird spider Selenocosmia hainana.</title>
        <authorList>
            <person name="Li D.-L."/>
            <person name="Xiao Y.-C."/>
            <person name="Hu W.-J."/>
            <person name="Xie J.-Y."/>
            <person name="Bosmans F."/>
            <person name="Tytgat J."/>
            <person name="Liang S.-P."/>
        </authorList>
    </citation>
    <scope>SEQUENCE REVISION TO 78-81</scope>
    <scope>FUNCTION</scope>
    <scope>SUBUNIT</scope>
    <scope>SUBCELLULAR LOCATION</scope>
    <scope>MASS SPECTROMETRY</scope>
    <scope>DISULFIDE BONDS</scope>
    <scope>AMIDATION AT LEU-81</scope>
    <scope>STRUCTURE BY NMR OF 48-81</scope>
    <source>
        <tissue>Venom</tissue>
    </source>
</reference>
<reference key="4">
    <citation type="journal article" date="2015" name="Mol. Pharmacol.">
        <title>Rational engineering defines a molecular switch that is essential for activity of spider-venom peptides against the analgesics target NaV1.7.</title>
        <authorList>
            <person name="Klint J.K."/>
            <person name="Chin Y.K."/>
            <person name="Mobli M."/>
        </authorList>
    </citation>
    <scope>STRUCTURE BY NMR OF 48-81 OF WILD-TYPE AND G54W/N71S MUTANT</scope>
    <scope>FUNCTION</scope>
    <scope>RECOMBINANT EXPRESSION OF 48-81</scope>
    <scope>MUTAGENESIS OF LYS-51; GLY-54; ASN-71 AND VAL-79</scope>
</reference>
<organism>
    <name type="scientific">Cyriopagopus hainanus</name>
    <name type="common">Chinese bird spider</name>
    <name type="synonym">Haplopelma hainanum</name>
    <dbReference type="NCBI Taxonomy" id="209901"/>
    <lineage>
        <taxon>Eukaryota</taxon>
        <taxon>Metazoa</taxon>
        <taxon>Ecdysozoa</taxon>
        <taxon>Arthropoda</taxon>
        <taxon>Chelicerata</taxon>
        <taxon>Arachnida</taxon>
        <taxon>Araneae</taxon>
        <taxon>Mygalomorphae</taxon>
        <taxon>Theraphosidae</taxon>
        <taxon>Haplopelma</taxon>
    </lineage>
</organism>
<sequence>MKASMFLALAGLVLLFVVCYASESEEKEFPRELISKIFAVDDFKGEERECKGFGKSCVPGKNECCSGYACNSRDKWCKVLLGK</sequence>